<keyword id="KW-1157">Cap snatching</keyword>
<keyword id="KW-1262">Eukaryotic host gene expression shutoff by virus</keyword>
<keyword id="KW-1191">Eukaryotic host transcription shutoff by virus</keyword>
<keyword id="KW-1190">Host gene expression shutoff by virus</keyword>
<keyword id="KW-1045">Host mitochondrion</keyword>
<keyword id="KW-1048">Host nucleus</keyword>
<keyword id="KW-0945">Host-virus interaction</keyword>
<keyword id="KW-1090">Inhibition of host innate immune response by virus</keyword>
<keyword id="KW-1097">Inhibition of host MAVS by virus</keyword>
<keyword id="KW-1113">Inhibition of host RLR pathway by virus</keyword>
<keyword id="KW-1104">Inhibition of host RNA polymerase II by virus</keyword>
<keyword id="KW-0506">mRNA capping</keyword>
<keyword id="KW-0507">mRNA processing</keyword>
<keyword id="KW-0899">Viral immunoevasion</keyword>
<keyword id="KW-1195">Viral transcription</keyword>
<keyword id="KW-0946">Virion</keyword>
<accession>Q809P9</accession>
<feature type="chain" id="PRO_0000311144" description="Polymerase basic protein 2">
    <location>
        <begin position="1" status="less than"/>
        <end position="735" status="greater than"/>
    </location>
</feature>
<feature type="short sequence motif" description="Nuclear localization signal" evidence="1">
    <location>
        <begin position="729"/>
        <end position="732"/>
    </location>
</feature>
<feature type="non-terminal residue">
    <location>
        <position position="1"/>
    </location>
</feature>
<feature type="non-terminal residue">
    <location>
        <position position="735"/>
    </location>
</feature>
<reference key="1">
    <citation type="journal article" date="2002" name="Proc. Natl. Acad. Sci. U.S.A.">
        <title>Emergence of multiple genotypes of H5N1 avian influenza viruses in Hong Kong SAR.</title>
        <authorList>
            <person name="Guan Y."/>
            <person name="Peiris J.S.M."/>
            <person name="Lipatov A.S."/>
            <person name="Ellis T.M."/>
            <person name="Dyrting K.C."/>
            <person name="Krauss S."/>
            <person name="Zhang L.J."/>
            <person name="Webster R.G."/>
            <person name="Shortridge K.F."/>
        </authorList>
    </citation>
    <scope>NUCLEOTIDE SEQUENCE [GENOMIC RNA]</scope>
</reference>
<reference key="2">
    <citation type="submission" date="2008-03" db="EMBL/GenBank/DDBJ databases">
        <authorList>
            <person name="Li K.S."/>
            <person name="Xu K.M."/>
            <person name="Guan Y."/>
        </authorList>
    </citation>
    <scope>SEQUENCE REVISION</scope>
</reference>
<organismHost>
    <name type="scientific">Aves</name>
    <dbReference type="NCBI Taxonomy" id="8782"/>
</organismHost>
<organismHost>
    <name type="scientific">Felis catus</name>
    <name type="common">Cat</name>
    <name type="synonym">Felis silvestris catus</name>
    <dbReference type="NCBI Taxonomy" id="9685"/>
</organismHost>
<organismHost>
    <name type="scientific">Homo sapiens</name>
    <name type="common">Human</name>
    <dbReference type="NCBI Taxonomy" id="9606"/>
</organismHost>
<organismHost>
    <name type="scientific">Panthera pardus</name>
    <name type="common">Leopard</name>
    <name type="synonym">Felis pardus</name>
    <dbReference type="NCBI Taxonomy" id="9691"/>
</organismHost>
<organismHost>
    <name type="scientific">Panthera tigris</name>
    <name type="common">Tiger</name>
    <dbReference type="NCBI Taxonomy" id="9694"/>
</organismHost>
<organismHost>
    <name type="scientific">Sus scrofa</name>
    <name type="common">Pig</name>
    <dbReference type="NCBI Taxonomy" id="9823"/>
</organismHost>
<dbReference type="EMBL" id="AF509148">
    <property type="protein sequence ID" value="AAO52991.2"/>
    <property type="molecule type" value="Genomic_DNA"/>
</dbReference>
<dbReference type="SMR" id="Q809P9"/>
<dbReference type="GO" id="GO:0033650">
    <property type="term" value="C:host cell mitochondrion"/>
    <property type="evidence" value="ECO:0007669"/>
    <property type="project" value="UniProtKB-SubCell"/>
</dbReference>
<dbReference type="GO" id="GO:0042025">
    <property type="term" value="C:host cell nucleus"/>
    <property type="evidence" value="ECO:0007669"/>
    <property type="project" value="UniProtKB-SubCell"/>
</dbReference>
<dbReference type="GO" id="GO:0044423">
    <property type="term" value="C:virion component"/>
    <property type="evidence" value="ECO:0007669"/>
    <property type="project" value="UniProtKB-KW"/>
</dbReference>
<dbReference type="GO" id="GO:0003723">
    <property type="term" value="F:RNA binding"/>
    <property type="evidence" value="ECO:0007669"/>
    <property type="project" value="InterPro"/>
</dbReference>
<dbReference type="GO" id="GO:0006370">
    <property type="term" value="P:7-methylguanosine mRNA capping"/>
    <property type="evidence" value="ECO:0007669"/>
    <property type="project" value="UniProtKB-KW"/>
</dbReference>
<dbReference type="GO" id="GO:0075526">
    <property type="term" value="P:cap snatching"/>
    <property type="evidence" value="ECO:0007669"/>
    <property type="project" value="UniProtKB-KW"/>
</dbReference>
<dbReference type="GO" id="GO:0006351">
    <property type="term" value="P:DNA-templated transcription"/>
    <property type="evidence" value="ECO:0007669"/>
    <property type="project" value="InterPro"/>
</dbReference>
<dbReference type="GO" id="GO:0039545">
    <property type="term" value="P:symbiont-mediated suppression of host cytoplasmic pattern recognition receptor signaling pathway via inhibition of MAVS activity"/>
    <property type="evidence" value="ECO:0007669"/>
    <property type="project" value="UniProtKB-KW"/>
</dbReference>
<dbReference type="GO" id="GO:0039657">
    <property type="term" value="P:symbiont-mediated suppression of host gene expression"/>
    <property type="evidence" value="ECO:0007669"/>
    <property type="project" value="UniProtKB-KW"/>
</dbReference>
<dbReference type="GO" id="GO:0039523">
    <property type="term" value="P:symbiont-mediated suppression of host mRNA transcription via inhibition of RNA polymerase II activity"/>
    <property type="evidence" value="ECO:0007669"/>
    <property type="project" value="UniProtKB-KW"/>
</dbReference>
<dbReference type="Gene3D" id="3.30.30.90">
    <property type="entry name" value="Polymerase Basic Protein 2, C-terminal domain"/>
    <property type="match status" value="1"/>
</dbReference>
<dbReference type="InterPro" id="IPR049110">
    <property type="entry name" value="Flu_PB2_2nd"/>
</dbReference>
<dbReference type="InterPro" id="IPR049114">
    <property type="entry name" value="Flu_PB2_6th"/>
</dbReference>
<dbReference type="InterPro" id="IPR049115">
    <property type="entry name" value="Flu_PB2_C"/>
</dbReference>
<dbReference type="InterPro" id="IPR048298">
    <property type="entry name" value="Flu_PB2_CAP-bd"/>
</dbReference>
<dbReference type="InterPro" id="IPR049111">
    <property type="entry name" value="Flu_PB2_middle"/>
</dbReference>
<dbReference type="InterPro" id="IPR049106">
    <property type="entry name" value="Flu_PB2_N"/>
</dbReference>
<dbReference type="InterPro" id="IPR049113">
    <property type="entry name" value="PB2_helical"/>
</dbReference>
<dbReference type="InterPro" id="IPR037258">
    <property type="entry name" value="PDB2_C"/>
</dbReference>
<dbReference type="Pfam" id="PF20947">
    <property type="entry name" value="Flu_PB2_1st"/>
    <property type="match status" value="1"/>
</dbReference>
<dbReference type="Pfam" id="PF20948">
    <property type="entry name" value="Flu_PB2_2nd"/>
    <property type="match status" value="1"/>
</dbReference>
<dbReference type="Pfam" id="PF20949">
    <property type="entry name" value="Flu_PB2_3rd"/>
    <property type="match status" value="1"/>
</dbReference>
<dbReference type="Pfam" id="PF20950">
    <property type="entry name" value="Flu_PB2_4th"/>
    <property type="match status" value="1"/>
</dbReference>
<dbReference type="Pfam" id="PF00604">
    <property type="entry name" value="Flu_PB2_5th"/>
    <property type="match status" value="1"/>
</dbReference>
<dbReference type="Pfam" id="PF20951">
    <property type="entry name" value="Flu_PB2_6th"/>
    <property type="match status" value="1"/>
</dbReference>
<dbReference type="Pfam" id="PF20952">
    <property type="entry name" value="Flu_PB2_7th"/>
    <property type="match status" value="1"/>
</dbReference>
<dbReference type="SUPFAM" id="SSF160453">
    <property type="entry name" value="PB2 C-terminal domain-like"/>
    <property type="match status" value="1"/>
</dbReference>
<evidence type="ECO:0000250" key="1"/>
<evidence type="ECO:0000250" key="2">
    <source>
        <dbReference type="UniProtKB" id="P03428"/>
    </source>
</evidence>
<evidence type="ECO:0000305" key="3"/>
<comment type="function">
    <text evidence="2">Plays an essential role in transcription initiation and cap-stealing mechanism, in which cellular capped pre-mRNAs are used to generate primers for viral transcription. Binds the cap of the target pre-RNA which is subsequently cleaved after 10-13 nucleotides by PA. Plays a role in the initiation of the viral genome replication and modulates the activity of the ribonucleoprotein (RNP) complex. In addition, participates in the inhibition of type I interferon induction through interaction with the host mitochondrial antiviral signaling protein MAVS.</text>
</comment>
<comment type="subunit">
    <text evidence="2">Influenza RNA polymerase is composed of three subunits: PB1, PB2 and PA. Interacts (via N-terminus) with PB1 (via C-terminus). Interacts with nucleoprotein NP (via N-terminus). Interacts (via N-terminus) with host MAVS (via N-terminus); this interaction inhibits host innate immune response.</text>
</comment>
<comment type="subcellular location">
    <subcellularLocation>
        <location>Virion</location>
    </subcellularLocation>
    <subcellularLocation>
        <location evidence="2">Host nucleus</location>
    </subcellularLocation>
    <subcellularLocation>
        <location evidence="2">Host mitochondrion</location>
    </subcellularLocation>
</comment>
<comment type="similarity">
    <text evidence="3">Belongs to the influenza viruses PB2 family.</text>
</comment>
<organism>
    <name type="scientific">Influenza A virus (strain A/Silky Chicken/Hong Kong/SF189/2001 H5N1 genotype A)</name>
    <dbReference type="NCBI Taxonomy" id="196430"/>
    <lineage>
        <taxon>Viruses</taxon>
        <taxon>Riboviria</taxon>
        <taxon>Orthornavirae</taxon>
        <taxon>Negarnaviricota</taxon>
        <taxon>Polyploviricotina</taxon>
        <taxon>Insthoviricetes</taxon>
        <taxon>Articulavirales</taxon>
        <taxon>Orthomyxoviridae</taxon>
        <taxon>Alphainfluenzavirus</taxon>
        <taxon>Alphainfluenzavirus influenzae</taxon>
        <taxon>Influenza A virus</taxon>
    </lineage>
</organism>
<gene>
    <name type="primary">PB2</name>
</gene>
<name>PB2_I01A0</name>
<protein>
    <recommendedName>
        <fullName>Polymerase basic protein 2</fullName>
    </recommendedName>
    <alternativeName>
        <fullName>RNA-directed RNA polymerase subunit P3</fullName>
    </alternativeName>
</protein>
<proteinExistence type="inferred from homology"/>
<sequence>RDLMSQSRTREILTKTTVDHMAIIKKYTSGRQEKNPALRMKWMMAMKYPITADKRIMEMIPERNEQGQTLWSKTNDAGSDRVMVSPLAVTWWNRNGPTTSTVHYPKVYKTYFEKVERLKHGTFGPVHFRNQVKIRRRVDINPGHADLSAKEAQDVIMEVVFPNEVGARILTSESQLTITKEKKEELQDCKIAPLMVAYMLERELVRKTRFLPVAGGTSSVYIEVLHLTQGTCWEQMYTPGGEVRNDDVDQSLIIAARNIVRRATVSADPLASLLEMCHSTQIGGIRMVDILRQNPTEEQAVDICKAAMGLRISSSFSFGGFTFKRTSGSSVKKEEEVLTGNLQTLKIRVHEGYEEFTMVGRRATAILRKATRRLIQLIVSGRDEQSIAEAIIVAMVFSQEDCMIKAVRGDLNFVNRANQRLNPMHQLLRHFQKDAKVLFQNWGIEPIDNVMGMVGILPDMTPSTEMSLRGVRVSKMGVDEYSSTERVIVSIDRFLRVRDQRGNVLLSPEEVSETQGTEKLTITYSSSMMWEINGPESVLVNTYQWIIRNWETVKIQWSQDPTMLYNKMEFEPFQSLVPKAARGQYSGFVRTLFQQMRDVLGTFDTVQIIKLLPFAAAPPEQSRMQFSSLTVNVRGSGMRILVRGNSPVFNYNKATKRLTVLGKDAGALTEDPDEGTAGVESAVLRGFLILGKEDKRYGPALSINELINLAKGEKANVLIGQGDVVLVMKRKRDSS</sequence>